<proteinExistence type="inferred from homology"/>
<dbReference type="EC" id="2.4.99.28" evidence="1"/>
<dbReference type="EMBL" id="AE015928">
    <property type="protein sequence ID" value="AAO76302.1"/>
    <property type="molecule type" value="Genomic_DNA"/>
</dbReference>
<dbReference type="RefSeq" id="NP_810108.1">
    <property type="nucleotide sequence ID" value="NC_004663.1"/>
</dbReference>
<dbReference type="RefSeq" id="WP_011107650.1">
    <property type="nucleotide sequence ID" value="NC_004663.1"/>
</dbReference>
<dbReference type="SMR" id="Q8A8H2"/>
<dbReference type="FunCoup" id="Q8A8H2">
    <property type="interactions" value="152"/>
</dbReference>
<dbReference type="STRING" id="226186.BT_1195"/>
<dbReference type="CAZy" id="GT51">
    <property type="family name" value="Glycosyltransferase Family 51"/>
</dbReference>
<dbReference type="PaxDb" id="226186-BT_1195"/>
<dbReference type="EnsemblBacteria" id="AAO76302">
    <property type="protein sequence ID" value="AAO76302"/>
    <property type="gene ID" value="BT_1195"/>
</dbReference>
<dbReference type="GeneID" id="60927173"/>
<dbReference type="KEGG" id="bth:BT_1195"/>
<dbReference type="PATRIC" id="fig|226186.12.peg.1218"/>
<dbReference type="eggNOG" id="COG0744">
    <property type="taxonomic scope" value="Bacteria"/>
</dbReference>
<dbReference type="HOGENOM" id="CLU_006354_1_1_10"/>
<dbReference type="InParanoid" id="Q8A8H2"/>
<dbReference type="OrthoDB" id="9766909at2"/>
<dbReference type="UniPathway" id="UPA00219"/>
<dbReference type="Proteomes" id="UP000001414">
    <property type="component" value="Chromosome"/>
</dbReference>
<dbReference type="GO" id="GO:0009274">
    <property type="term" value="C:peptidoglycan-based cell wall"/>
    <property type="evidence" value="ECO:0007669"/>
    <property type="project" value="InterPro"/>
</dbReference>
<dbReference type="GO" id="GO:0005886">
    <property type="term" value="C:plasma membrane"/>
    <property type="evidence" value="ECO:0000318"/>
    <property type="project" value="GO_Central"/>
</dbReference>
<dbReference type="GO" id="GO:0016763">
    <property type="term" value="F:pentosyltransferase activity"/>
    <property type="evidence" value="ECO:0007669"/>
    <property type="project" value="InterPro"/>
</dbReference>
<dbReference type="GO" id="GO:0008955">
    <property type="term" value="F:peptidoglycan glycosyltransferase activity"/>
    <property type="evidence" value="ECO:0000318"/>
    <property type="project" value="GO_Central"/>
</dbReference>
<dbReference type="GO" id="GO:0071555">
    <property type="term" value="P:cell wall organization"/>
    <property type="evidence" value="ECO:0007669"/>
    <property type="project" value="UniProtKB-KW"/>
</dbReference>
<dbReference type="GO" id="GO:0009252">
    <property type="term" value="P:peptidoglycan biosynthetic process"/>
    <property type="evidence" value="ECO:0000318"/>
    <property type="project" value="GO_Central"/>
</dbReference>
<dbReference type="GO" id="GO:0008360">
    <property type="term" value="P:regulation of cell shape"/>
    <property type="evidence" value="ECO:0007669"/>
    <property type="project" value="UniProtKB-KW"/>
</dbReference>
<dbReference type="Gene3D" id="1.10.3810.10">
    <property type="entry name" value="Biosynthetic peptidoglycan transglycosylase-like"/>
    <property type="match status" value="1"/>
</dbReference>
<dbReference type="HAMAP" id="MF_00766">
    <property type="entry name" value="PGT_MtgA"/>
    <property type="match status" value="1"/>
</dbReference>
<dbReference type="InterPro" id="IPR001264">
    <property type="entry name" value="Glyco_trans_51"/>
</dbReference>
<dbReference type="InterPro" id="IPR023346">
    <property type="entry name" value="Lysozyme-like_dom_sf"/>
</dbReference>
<dbReference type="InterPro" id="IPR036950">
    <property type="entry name" value="PBP_transglycosylase"/>
</dbReference>
<dbReference type="InterPro" id="IPR011812">
    <property type="entry name" value="Pep_trsgly"/>
</dbReference>
<dbReference type="NCBIfam" id="TIGR02070">
    <property type="entry name" value="mono_pep_trsgly"/>
    <property type="match status" value="1"/>
</dbReference>
<dbReference type="PANTHER" id="PTHR30400:SF0">
    <property type="entry name" value="BIOSYNTHETIC PEPTIDOGLYCAN TRANSGLYCOSYLASE"/>
    <property type="match status" value="1"/>
</dbReference>
<dbReference type="PANTHER" id="PTHR30400">
    <property type="entry name" value="MONOFUNCTIONAL BIOSYNTHETIC PEPTIDOGLYCAN TRANSGLYCOSYLASE"/>
    <property type="match status" value="1"/>
</dbReference>
<dbReference type="Pfam" id="PF00912">
    <property type="entry name" value="Transgly"/>
    <property type="match status" value="1"/>
</dbReference>
<dbReference type="SUPFAM" id="SSF53955">
    <property type="entry name" value="Lysozyme-like"/>
    <property type="match status" value="1"/>
</dbReference>
<evidence type="ECO:0000255" key="1">
    <source>
        <dbReference type="HAMAP-Rule" id="MF_00766"/>
    </source>
</evidence>
<keyword id="KW-0997">Cell inner membrane</keyword>
<keyword id="KW-1003">Cell membrane</keyword>
<keyword id="KW-0133">Cell shape</keyword>
<keyword id="KW-0961">Cell wall biogenesis/degradation</keyword>
<keyword id="KW-0328">Glycosyltransferase</keyword>
<keyword id="KW-0472">Membrane</keyword>
<keyword id="KW-0573">Peptidoglycan synthesis</keyword>
<keyword id="KW-1185">Reference proteome</keyword>
<keyword id="KW-0808">Transferase</keyword>
<keyword id="KW-0812">Transmembrane</keyword>
<keyword id="KW-1133">Transmembrane helix</keyword>
<accession>Q8A8H2</accession>
<comment type="function">
    <text evidence="1">Peptidoglycan polymerase that catalyzes glycan chain elongation from lipid-linked precursors.</text>
</comment>
<comment type="catalytic activity">
    <reaction evidence="1">
        <text>[GlcNAc-(1-&gt;4)-Mur2Ac(oyl-L-Ala-gamma-D-Glu-L-Lys-D-Ala-D-Ala)](n)-di-trans,octa-cis-undecaprenyl diphosphate + beta-D-GlcNAc-(1-&gt;4)-Mur2Ac(oyl-L-Ala-gamma-D-Glu-L-Lys-D-Ala-D-Ala)-di-trans,octa-cis-undecaprenyl diphosphate = [GlcNAc-(1-&gt;4)-Mur2Ac(oyl-L-Ala-gamma-D-Glu-L-Lys-D-Ala-D-Ala)](n+1)-di-trans,octa-cis-undecaprenyl diphosphate + di-trans,octa-cis-undecaprenyl diphosphate + H(+)</text>
        <dbReference type="Rhea" id="RHEA:23708"/>
        <dbReference type="Rhea" id="RHEA-COMP:9602"/>
        <dbReference type="Rhea" id="RHEA-COMP:9603"/>
        <dbReference type="ChEBI" id="CHEBI:15378"/>
        <dbReference type="ChEBI" id="CHEBI:58405"/>
        <dbReference type="ChEBI" id="CHEBI:60033"/>
        <dbReference type="ChEBI" id="CHEBI:78435"/>
        <dbReference type="EC" id="2.4.99.28"/>
    </reaction>
</comment>
<comment type="pathway">
    <text evidence="1">Cell wall biogenesis; peptidoglycan biosynthesis.</text>
</comment>
<comment type="subcellular location">
    <subcellularLocation>
        <location evidence="1">Cell inner membrane</location>
        <topology evidence="1">Single-pass membrane protein</topology>
    </subcellularLocation>
</comment>
<comment type="similarity">
    <text evidence="1">Belongs to the glycosyltransferase 51 family.</text>
</comment>
<reference key="1">
    <citation type="journal article" date="2003" name="Science">
        <title>A genomic view of the human-Bacteroides thetaiotaomicron symbiosis.</title>
        <authorList>
            <person name="Xu J."/>
            <person name="Bjursell M.K."/>
            <person name="Himrod J."/>
            <person name="Deng S."/>
            <person name="Carmichael L.K."/>
            <person name="Chiang H.C."/>
            <person name="Hooper L.V."/>
            <person name="Gordon J.I."/>
        </authorList>
    </citation>
    <scope>NUCLEOTIDE SEQUENCE [LARGE SCALE GENOMIC DNA]</scope>
    <source>
        <strain>ATCC 29148 / DSM 2079 / JCM 5827 / CCUG 10774 / NCTC 10582 / VPI-5482 / E50</strain>
    </source>
</reference>
<name>MTGA_BACTN</name>
<organism>
    <name type="scientific">Bacteroides thetaiotaomicron (strain ATCC 29148 / DSM 2079 / JCM 5827 / CCUG 10774 / NCTC 10582 / VPI-5482 / E50)</name>
    <dbReference type="NCBI Taxonomy" id="226186"/>
    <lineage>
        <taxon>Bacteria</taxon>
        <taxon>Pseudomonadati</taxon>
        <taxon>Bacteroidota</taxon>
        <taxon>Bacteroidia</taxon>
        <taxon>Bacteroidales</taxon>
        <taxon>Bacteroidaceae</taxon>
        <taxon>Bacteroides</taxon>
    </lineage>
</organism>
<feature type="chain" id="PRO_0000083116" description="Biosynthetic peptidoglycan transglycosylase">
    <location>
        <begin position="1"/>
        <end position="248"/>
    </location>
</feature>
<feature type="transmembrane region" description="Helical" evidence="1">
    <location>
        <begin position="17"/>
        <end position="37"/>
    </location>
</feature>
<gene>
    <name evidence="1" type="primary">mtgA</name>
    <name type="ordered locus">BT_1195</name>
</gene>
<sequence>MHRPLPIKKILRYARNLLIFFFASTILAVIVYRFMPVYVTPLMVIRSVQQLASGDKPTWKHTWVSFDKISPHLPMAVIASEDNRFAEHNGFDFIEIEKAMKENEKRKRKRGASTISQQTAKNVFLWPQSSWVRKGFEVYFTFLIELFWSKERIMEVYLNSIEMGKGIYGAQATAKYKFNTTAAKLSSGQCALIAATLPNPIRFNSAKPSAYLLKRQKQILRLMNLVPKFPPVEKKAVDKKDTRKKKKK</sequence>
<protein>
    <recommendedName>
        <fullName evidence="1">Biosynthetic peptidoglycan transglycosylase</fullName>
        <ecNumber evidence="1">2.4.99.28</ecNumber>
    </recommendedName>
    <alternativeName>
        <fullName evidence="1">Glycan polymerase</fullName>
    </alternativeName>
    <alternativeName>
        <fullName evidence="1">Peptidoglycan glycosyltransferase MtgA</fullName>
        <shortName evidence="1">PGT</shortName>
    </alternativeName>
</protein>